<name>EXE1_HELHO</name>
<evidence type="ECO:0000269" key="1">
    <source>
    </source>
</evidence>
<evidence type="ECO:0000269" key="2">
    <source>
    </source>
</evidence>
<evidence type="ECO:0000269" key="3">
    <source>
    </source>
</evidence>
<evidence type="ECO:0000269" key="4">
    <source>
    </source>
</evidence>
<evidence type="ECO:0000305" key="5"/>
<evidence type="ECO:0000305" key="6">
    <source>
    </source>
</evidence>
<comment type="function">
    <text evidence="1 2 3 4">O-linked and free exendin-1 and exendin-1b have vasoactive intestinal peptide(VIP)/secretin-like biological activities. They interact with rat and human VIP receptors 1 (VIPR1) and 2 (VIPR2), with the highest affinity for the human VIPR2. They induce hypotension that is mediated by relaxation of cardiac smooth muscle.</text>
</comment>
<comment type="subcellular location">
    <subcellularLocation>
        <location>Secreted</location>
    </subcellularLocation>
</comment>
<comment type="tissue specificity">
    <text>Expressed by the venom gland.</text>
</comment>
<comment type="PTM">
    <text evidence="6">O-linked glycan consists of Hex-HexNAc saccharide.</text>
</comment>
<comment type="PTM">
    <text evidence="1">Glycosylation may be of interest for the biological stability of exendin-1 and exendin-1b.</text>
</comment>
<comment type="mass spectrometry">
    <molecule>Exendin-1b</molecule>
    <text>Exendin-1b.</text>
</comment>
<comment type="mass spectrometry">
    <molecule>Exendin-1</molecule>
    <text>Exendin-1.</text>
</comment>
<comment type="mass spectrometry">
    <molecule>Exendin-1b</molecule>
    <text>O-glycosylated exendin-1b.</text>
</comment>
<comment type="mass spectrometry">
    <molecule>Exendin-1</molecule>
    <text>O-glycosylated exendin-1.</text>
</comment>
<comment type="similarity">
    <text evidence="5">Belongs to the glucagon family.</text>
</comment>
<organism>
    <name type="scientific">Heloderma horridum horridum</name>
    <name type="common">Mexican beaded lizard</name>
    <dbReference type="NCBI Taxonomy" id="8552"/>
    <lineage>
        <taxon>Eukaryota</taxon>
        <taxon>Metazoa</taxon>
        <taxon>Chordata</taxon>
        <taxon>Craniata</taxon>
        <taxon>Vertebrata</taxon>
        <taxon>Euteleostomi</taxon>
        <taxon>Lepidosauria</taxon>
        <taxon>Squamata</taxon>
        <taxon>Bifurcata</taxon>
        <taxon>Unidentata</taxon>
        <taxon>Episquamata</taxon>
        <taxon>Toxicofera</taxon>
        <taxon>Anguimorpha</taxon>
        <taxon>Neoanguimorpha</taxon>
        <taxon>Helodermatidae</taxon>
        <taxon>Heloderma</taxon>
    </lineage>
</organism>
<protein>
    <recommendedName>
        <fullName>Exendin-1</fullName>
    </recommendedName>
    <alternativeName>
        <fullName>Helospectin-1</fullName>
    </alternativeName>
    <alternativeName>
        <fullName>VIP-like 1</fullName>
    </alternativeName>
    <component>
        <recommendedName>
            <fullName>Exendin-1b</fullName>
        </recommendedName>
        <alternativeName>
            <fullName>Helospectin-2</fullName>
        </alternativeName>
    </component>
</protein>
<proteinExistence type="evidence at protein level"/>
<sequence>HSDATFTAEYSKLLAKLALQKYLESILGSSTSPRPPSS</sequence>
<dbReference type="SMR" id="P0DJ94"/>
<dbReference type="iPTMnet" id="P0DJ94"/>
<dbReference type="GO" id="GO:0005576">
    <property type="term" value="C:extracellular region"/>
    <property type="evidence" value="ECO:0007669"/>
    <property type="project" value="UniProtKB-SubCell"/>
</dbReference>
<dbReference type="GO" id="GO:0005179">
    <property type="term" value="F:hormone activity"/>
    <property type="evidence" value="ECO:0007669"/>
    <property type="project" value="InterPro"/>
</dbReference>
<dbReference type="GO" id="GO:0090729">
    <property type="term" value="F:toxin activity"/>
    <property type="evidence" value="ECO:0007669"/>
    <property type="project" value="UniProtKB-KW"/>
</dbReference>
<dbReference type="GO" id="GO:0008217">
    <property type="term" value="P:regulation of blood pressure"/>
    <property type="evidence" value="ECO:0007669"/>
    <property type="project" value="UniProtKB-KW"/>
</dbReference>
<dbReference type="Gene3D" id="6.10.250.590">
    <property type="match status" value="1"/>
</dbReference>
<dbReference type="InterPro" id="IPR000532">
    <property type="entry name" value="Glucagon_GIP_secretin_VIP"/>
</dbReference>
<dbReference type="Pfam" id="PF00123">
    <property type="entry name" value="Hormone_2"/>
    <property type="match status" value="1"/>
</dbReference>
<dbReference type="SMART" id="SM00070">
    <property type="entry name" value="GLUCA"/>
    <property type="match status" value="1"/>
</dbReference>
<dbReference type="PROSITE" id="PS00260">
    <property type="entry name" value="GLUCAGON"/>
    <property type="match status" value="1"/>
</dbReference>
<reference key="1">
    <citation type="journal article" date="2000" name="Eur. J. Biochem.">
        <title>Evidence that the lizard helospectin peptides are O-glycosylated.</title>
        <authorList>
            <person name="Vandermeers-Piret M.C."/>
            <person name="Vandermeers A."/>
            <person name="Gourlet P."/>
            <person name="Ali M.H."/>
            <person name="Waelbroeck M."/>
            <person name="Robberecht P."/>
        </authorList>
    </citation>
    <scope>PROTEIN SEQUENCE</scope>
    <scope>FUNCTION</scope>
    <scope>GLYCOSYLATION AT SER-32</scope>
    <scope>MASS SPECTROMETRY</scope>
    <source>
        <tissue>Venom</tissue>
    </source>
</reference>
<reference key="2">
    <citation type="journal article" date="1998" name="Ann. N. Y. Acad. Sci.">
        <title>Analogues of VIP, helodermin, and PACAP discriminate between rat and human VIP1 and VIP2 receptors.</title>
        <authorList>
            <person name="Gourlet P."/>
            <person name="Vandermeers A."/>
            <person name="Van Rampelbergh J."/>
            <person name="De Neef P."/>
            <person name="Cnudde J."/>
            <person name="Waelbroeck M."/>
            <person name="Robberecht P."/>
        </authorList>
    </citation>
    <scope>FUNCTION</scope>
</reference>
<reference key="3">
    <citation type="journal article" date="2004" name="Peptides">
        <title>Helospectin I and II evoke vasodilation in the intact peripheral microcirculation.</title>
        <authorList>
            <person name="Tsueshita T."/>
            <person name="Onyukusel H."/>
            <person name="Sethi V."/>
            <person name="Gandhi S."/>
            <person name="Rubinstein I."/>
        </authorList>
    </citation>
    <scope>FUNCTION</scope>
</reference>
<reference key="4">
    <citation type="journal article" date="2010" name="Mol. Biol. Evol.">
        <title>Novel venom proteins produced by differential domain-expression strategies in beaded lizards and gila monsters (genus Heloderma).</title>
        <authorList>
            <person name="Fry B.G."/>
            <person name="Roelants K."/>
            <person name="Winter K."/>
            <person name="Hodgson W.C."/>
            <person name="Griesman L."/>
            <person name="Kwok H.F."/>
            <person name="Scanlon D."/>
            <person name="Karas J."/>
            <person name="Shaw C."/>
            <person name="Wong L."/>
            <person name="Norman J.A."/>
        </authorList>
    </citation>
    <scope>SYNTHESIS</scope>
    <scope>FUNCTION</scope>
</reference>
<keyword id="KW-0903">Direct protein sequencing</keyword>
<keyword id="KW-1213">G-protein coupled receptor impairing toxin</keyword>
<keyword id="KW-0325">Glycoprotein</keyword>
<keyword id="KW-0382">Hypotensive agent</keyword>
<keyword id="KW-0964">Secreted</keyword>
<keyword id="KW-0800">Toxin</keyword>
<accession>P0DJ94</accession>
<feature type="chain" id="PRO_0000414096" description="Exendin-1">
    <location>
        <begin position="1"/>
        <end position="38"/>
    </location>
</feature>
<feature type="chain" id="PRO_0000414097" description="Exendin-1b">
    <location>
        <begin position="1"/>
        <end position="37"/>
    </location>
</feature>
<feature type="glycosylation site" description="O-linked (HexNAc...) serine; in Exendin-1 and Exendin-1b" evidence="1">
    <location>
        <position position="32"/>
    </location>
</feature>